<reference key="1">
    <citation type="journal article" date="1991" name="DNA Seq.">
        <title>Sequence and features of the tryptophan operon of Vibrio parahemolyticus.</title>
        <authorList>
            <person name="Crawford I.P."/>
            <person name="Han C.Y."/>
            <person name="Silverman M."/>
        </authorList>
    </citation>
    <scope>NUCLEOTIDE SEQUENCE [GENOMIC DNA]</scope>
    <source>
        <strain>BB22</strain>
    </source>
</reference>
<reference key="2">
    <citation type="journal article" date="2003" name="Lancet">
        <title>Genome sequence of Vibrio parahaemolyticus: a pathogenic mechanism distinct from that of V. cholerae.</title>
        <authorList>
            <person name="Makino K."/>
            <person name="Oshima K."/>
            <person name="Kurokawa K."/>
            <person name="Yokoyama K."/>
            <person name="Uda T."/>
            <person name="Tagomori K."/>
            <person name="Iijima Y."/>
            <person name="Najima M."/>
            <person name="Nakano M."/>
            <person name="Yamashita A."/>
            <person name="Kubota Y."/>
            <person name="Kimura S."/>
            <person name="Yasunaga T."/>
            <person name="Honda T."/>
            <person name="Shinagawa H."/>
            <person name="Hattori M."/>
            <person name="Iida T."/>
        </authorList>
    </citation>
    <scope>NUCLEOTIDE SEQUENCE [LARGE SCALE GENOMIC DNA]</scope>
    <source>
        <strain>RIMD 2210633</strain>
    </source>
</reference>
<proteinExistence type="inferred from homology"/>
<organism>
    <name type="scientific">Vibrio parahaemolyticus serotype O3:K6 (strain RIMD 2210633)</name>
    <dbReference type="NCBI Taxonomy" id="223926"/>
    <lineage>
        <taxon>Bacteria</taxon>
        <taxon>Pseudomonadati</taxon>
        <taxon>Pseudomonadota</taxon>
        <taxon>Gammaproteobacteria</taxon>
        <taxon>Vibrionales</taxon>
        <taxon>Vibrionaceae</taxon>
        <taxon>Vibrio</taxon>
    </lineage>
</organism>
<evidence type="ECO:0000250" key="1"/>
<evidence type="ECO:0000250" key="2">
    <source>
        <dbReference type="UniProtKB" id="P00897"/>
    </source>
</evidence>
<evidence type="ECO:0000305" key="3"/>
<dbReference type="EC" id="4.1.3.27"/>
<dbReference type="EMBL" id="X17149">
    <property type="protein sequence ID" value="CAA35031.1"/>
    <property type="molecule type" value="Genomic_DNA"/>
</dbReference>
<dbReference type="EMBL" id="BA000031">
    <property type="protein sequence ID" value="BAC60219.1"/>
    <property type="status" value="ALT_INIT"/>
    <property type="molecule type" value="Genomic_DNA"/>
</dbReference>
<dbReference type="RefSeq" id="NP_798335.1">
    <property type="nucleotide sequence ID" value="NC_004603.1"/>
</dbReference>
<dbReference type="SMR" id="P22099"/>
<dbReference type="KEGG" id="vpa:VP1956"/>
<dbReference type="PATRIC" id="fig|223926.6.peg.1871"/>
<dbReference type="eggNOG" id="COG0147">
    <property type="taxonomic scope" value="Bacteria"/>
</dbReference>
<dbReference type="HOGENOM" id="CLU_006493_9_4_6"/>
<dbReference type="UniPathway" id="UPA00035">
    <property type="reaction ID" value="UER00040"/>
</dbReference>
<dbReference type="Proteomes" id="UP000002493">
    <property type="component" value="Chromosome 1"/>
</dbReference>
<dbReference type="GO" id="GO:0004049">
    <property type="term" value="F:anthranilate synthase activity"/>
    <property type="evidence" value="ECO:0007669"/>
    <property type="project" value="UniProtKB-EC"/>
</dbReference>
<dbReference type="GO" id="GO:0046872">
    <property type="term" value="F:metal ion binding"/>
    <property type="evidence" value="ECO:0007669"/>
    <property type="project" value="UniProtKB-KW"/>
</dbReference>
<dbReference type="GO" id="GO:0000162">
    <property type="term" value="P:L-tryptophan biosynthetic process"/>
    <property type="evidence" value="ECO:0007669"/>
    <property type="project" value="UniProtKB-UniPathway"/>
</dbReference>
<dbReference type="FunFam" id="3.60.120.10:FF:000006">
    <property type="entry name" value="Anthranilate synthase component 1"/>
    <property type="match status" value="1"/>
</dbReference>
<dbReference type="Gene3D" id="3.60.120.10">
    <property type="entry name" value="Anthranilate synthase"/>
    <property type="match status" value="1"/>
</dbReference>
<dbReference type="InterPro" id="IPR005801">
    <property type="entry name" value="ADC_synthase"/>
</dbReference>
<dbReference type="InterPro" id="IPR019999">
    <property type="entry name" value="Anth_synth_I-like"/>
</dbReference>
<dbReference type="InterPro" id="IPR006805">
    <property type="entry name" value="Anth_synth_I_N"/>
</dbReference>
<dbReference type="InterPro" id="IPR005257">
    <property type="entry name" value="Anth_synth_I_TrpE"/>
</dbReference>
<dbReference type="InterPro" id="IPR015890">
    <property type="entry name" value="Chorismate_C"/>
</dbReference>
<dbReference type="NCBIfam" id="NF010079">
    <property type="entry name" value="PRK13564.1"/>
    <property type="match status" value="1"/>
</dbReference>
<dbReference type="NCBIfam" id="TIGR00565">
    <property type="entry name" value="trpE_proteo"/>
    <property type="match status" value="1"/>
</dbReference>
<dbReference type="PANTHER" id="PTHR11236">
    <property type="entry name" value="AMINOBENZOATE/ANTHRANILATE SYNTHASE"/>
    <property type="match status" value="1"/>
</dbReference>
<dbReference type="PANTHER" id="PTHR11236:SF49">
    <property type="entry name" value="ANTHRANILATE SYNTHASE COMPONENT 1"/>
    <property type="match status" value="1"/>
</dbReference>
<dbReference type="Pfam" id="PF04715">
    <property type="entry name" value="Anth_synt_I_N"/>
    <property type="match status" value="1"/>
</dbReference>
<dbReference type="Pfam" id="PF00425">
    <property type="entry name" value="Chorismate_bind"/>
    <property type="match status" value="1"/>
</dbReference>
<dbReference type="PIRSF" id="PIRSF001373">
    <property type="entry name" value="TrpE"/>
    <property type="match status" value="1"/>
</dbReference>
<dbReference type="PRINTS" id="PR00095">
    <property type="entry name" value="ANTSNTHASEI"/>
</dbReference>
<dbReference type="SUPFAM" id="SSF56322">
    <property type="entry name" value="ADC synthase"/>
    <property type="match status" value="1"/>
</dbReference>
<protein>
    <recommendedName>
        <fullName>Anthranilate synthase component 1</fullName>
        <shortName>AS</shortName>
        <shortName>ASI</shortName>
        <ecNumber>4.1.3.27</ecNumber>
    </recommendedName>
</protein>
<sequence length="541" mass="59771">MRLCTAGRLKQLQGGLVNKAIEIKKLGQLEVLKASVPYTQDPTRLFHTICENKTDSLLLESAEIDSKQNLKSLLIVDSAVRIVCYGHTVSFHALTENGKNLLTHVNQNVRGEVASQFDGETLTLEFIQPCDTIDEDSRLREASSFDALRLVQHSFDLSSQDKHAIFLGGLFAYDLVANFEPLGDAVATNQCPDYVFYVAETLLVVDHQTESCQLQATLFVDGSQKAALESRIEDIRAQCTSPKRLPDATQVANITAQPSVPDQDFCQIVRDLKEFVVKGDIFQVVPSRRFTLPCPSPLAAYKELKQSNPSPYMFYMQDELFTLFGASPESALKYETDTNQIEIYPIAGTRRRGKRPNGEIDFDLDSRIELELRSDKKENAEHMMLVDLARNDVARISQAGTRHVADLLKVDRYSHVMHLVSRVVGQLRDDLDALHAYQACMNMGTLTGAPKIRAMQLIRDVEGARRGSYGGAVGYLTGEGTLDTCIVIRSAYVENGIAQVQAGAGVVFDSDPQAEADETRGKAQAVISAIQAAHSQPANKE</sequence>
<gene>
    <name type="primary">trpE</name>
    <name type="ordered locus">VP1956</name>
</gene>
<comment type="function">
    <text evidence="1">Part of a heterotetrameric complex that catalyzes the two-step biosynthesis of anthranilate, an intermediate in the biosynthesis of L-tryptophan. In the first step, the glutamine-binding beta subunit (TrpG) of anthranilate synthase (AS) provides the glutamine amidotransferase activity which generates ammonia as a substrate that, along with chorismate, is used in the second step, catalyzed by the large alpha subunit of AS (TrpE) to produce anthranilate. In the absence of TrpG, TrpE can synthesize anthranilate directly from chorismate and high concentrations of ammonia (By similarity).</text>
</comment>
<comment type="catalytic activity">
    <reaction>
        <text>chorismate + L-glutamine = anthranilate + pyruvate + L-glutamate + H(+)</text>
        <dbReference type="Rhea" id="RHEA:21732"/>
        <dbReference type="ChEBI" id="CHEBI:15361"/>
        <dbReference type="ChEBI" id="CHEBI:15378"/>
        <dbReference type="ChEBI" id="CHEBI:16567"/>
        <dbReference type="ChEBI" id="CHEBI:29748"/>
        <dbReference type="ChEBI" id="CHEBI:29985"/>
        <dbReference type="ChEBI" id="CHEBI:58359"/>
        <dbReference type="EC" id="4.1.3.27"/>
    </reaction>
</comment>
<comment type="cofactor">
    <cofactor evidence="2">
        <name>Mg(2+)</name>
        <dbReference type="ChEBI" id="CHEBI:18420"/>
    </cofactor>
    <text evidence="2">Binds 1 Mg(2+) ion per subunit.</text>
</comment>
<comment type="activity regulation">
    <text evidence="1">Feedback inhibited by tryptophan.</text>
</comment>
<comment type="pathway">
    <text>Amino-acid biosynthesis; L-tryptophan biosynthesis; L-tryptophan from chorismate: step 1/5.</text>
</comment>
<comment type="subunit">
    <text evidence="1">Heterotetramer consisting of two non-identical subunits: a beta subunit (TrpG) and a large alpha subunit (TrpE).</text>
</comment>
<comment type="similarity">
    <text evidence="3">Belongs to the anthranilate synthase component I family.</text>
</comment>
<comment type="sequence caution" evidence="3">
    <conflict type="erroneous initiation">
        <sequence resource="EMBL-CDS" id="BAC60219"/>
    </conflict>
    <text>Truncated N-terminus.</text>
</comment>
<accession>P22099</accession>
<feature type="chain" id="PRO_0000154119" description="Anthranilate synthase component 1">
    <location>
        <begin position="1"/>
        <end position="541"/>
    </location>
</feature>
<feature type="binding site" evidence="2">
    <location>
        <position position="61"/>
    </location>
    <ligand>
        <name>L-tryptophan</name>
        <dbReference type="ChEBI" id="CHEBI:57912"/>
    </ligand>
</feature>
<feature type="binding site" evidence="2">
    <location>
        <begin position="311"/>
        <end position="313"/>
    </location>
    <ligand>
        <name>L-tryptophan</name>
        <dbReference type="ChEBI" id="CHEBI:57912"/>
    </ligand>
</feature>
<feature type="binding site" evidence="2">
    <location>
        <begin position="348"/>
        <end position="349"/>
    </location>
    <ligand>
        <name>chorismate</name>
        <dbReference type="ChEBI" id="CHEBI:29748"/>
    </ligand>
</feature>
<feature type="binding site" evidence="2">
    <location>
        <position position="381"/>
    </location>
    <ligand>
        <name>Mg(2+)</name>
        <dbReference type="ChEBI" id="CHEBI:18420"/>
    </ligand>
</feature>
<feature type="binding site" evidence="2">
    <location>
        <position position="469"/>
    </location>
    <ligand>
        <name>chorismate</name>
        <dbReference type="ChEBI" id="CHEBI:29748"/>
    </ligand>
</feature>
<feature type="binding site" evidence="2">
    <location>
        <position position="489"/>
    </location>
    <ligand>
        <name>chorismate</name>
        <dbReference type="ChEBI" id="CHEBI:29748"/>
    </ligand>
</feature>
<feature type="binding site" evidence="2">
    <location>
        <begin position="503"/>
        <end position="505"/>
    </location>
    <ligand>
        <name>chorismate</name>
        <dbReference type="ChEBI" id="CHEBI:29748"/>
    </ligand>
</feature>
<feature type="binding site" evidence="2">
    <location>
        <position position="505"/>
    </location>
    <ligand>
        <name>chorismate</name>
        <dbReference type="ChEBI" id="CHEBI:29748"/>
    </ligand>
</feature>
<feature type="binding site" evidence="2">
    <location>
        <position position="518"/>
    </location>
    <ligand>
        <name>Mg(2+)</name>
        <dbReference type="ChEBI" id="CHEBI:18420"/>
    </ligand>
</feature>
<feature type="sequence conflict" description="In Ref. 1; CAA35031." evidence="3" ref="1">
    <original>V</original>
    <variation>L</variation>
    <location>
        <position position="105"/>
    </location>
</feature>
<feature type="sequence conflict" description="In Ref. 1; CAA35031." evidence="3" ref="1">
    <original>D</original>
    <variation>S</variation>
    <location>
        <position position="221"/>
    </location>
</feature>
<feature type="sequence conflict" description="In Ref. 1; CAA35031." evidence="3" ref="1">
    <original>E</original>
    <variation>A</variation>
    <location>
        <position position="233"/>
    </location>
</feature>
<feature type="sequence conflict" description="In Ref. 1; CAA35031." evidence="3" ref="1">
    <original>P</original>
    <variation>S</variation>
    <location>
        <position position="261"/>
    </location>
</feature>
<feature type="sequence conflict" description="In Ref. 1; CAA35031." evidence="3" ref="1">
    <original>S</original>
    <variation>G</variation>
    <location>
        <position position="366"/>
    </location>
</feature>
<feature type="sequence conflict" description="In Ref. 1; CAA35031." evidence="3" ref="1">
    <original>S</original>
    <variation>L</variation>
    <location>
        <position position="490"/>
    </location>
</feature>
<name>TRPE_VIBPA</name>
<keyword id="KW-0028">Amino-acid biosynthesis</keyword>
<keyword id="KW-0057">Aromatic amino acid biosynthesis</keyword>
<keyword id="KW-0456">Lyase</keyword>
<keyword id="KW-0460">Magnesium</keyword>
<keyword id="KW-0479">Metal-binding</keyword>
<keyword id="KW-0822">Tryptophan biosynthesis</keyword>